<dbReference type="EC" id="1.5.1.16"/>
<dbReference type="EC" id="1.5.1.11"/>
<dbReference type="EMBL" id="V00088">
    <property type="protein sequence ID" value="CAA23428.1"/>
    <property type="molecule type" value="Genomic_DNA"/>
</dbReference>
<dbReference type="PIR" id="A00399">
    <property type="entry name" value="DEAGLT"/>
</dbReference>
<dbReference type="RefSeq" id="NP_059680.1">
    <property type="nucleotide sequence ID" value="NC_002377.1"/>
</dbReference>
<dbReference type="SMR" id="P0A394"/>
<dbReference type="GO" id="GO:0047827">
    <property type="term" value="F:D-lysopine dehydrogenase activity"/>
    <property type="evidence" value="ECO:0007669"/>
    <property type="project" value="UniProtKB-EC"/>
</dbReference>
<dbReference type="GO" id="GO:0047830">
    <property type="term" value="F:D-octopine dehydrogenase activity"/>
    <property type="evidence" value="ECO:0007669"/>
    <property type="project" value="UniProtKB-EC"/>
</dbReference>
<dbReference type="Gene3D" id="1.10.1040.10">
    <property type="entry name" value="N-(1-d-carboxylethyl)-l-norvaline Dehydrogenase, domain 2"/>
    <property type="match status" value="1"/>
</dbReference>
<dbReference type="Gene3D" id="3.40.50.720">
    <property type="entry name" value="NAD(P)-binding Rossmann-like Domain"/>
    <property type="match status" value="1"/>
</dbReference>
<dbReference type="InterPro" id="IPR008927">
    <property type="entry name" value="6-PGluconate_DH-like_C_sf"/>
</dbReference>
<dbReference type="InterPro" id="IPR013328">
    <property type="entry name" value="6PGD_dom2"/>
</dbReference>
<dbReference type="InterPro" id="IPR036291">
    <property type="entry name" value="NAD(P)-bd_dom_sf"/>
</dbReference>
<dbReference type="InterPro" id="IPR051729">
    <property type="entry name" value="Opine/Lysopine_DH"/>
</dbReference>
<dbReference type="InterPro" id="IPR003421">
    <property type="entry name" value="Opine_DH"/>
</dbReference>
<dbReference type="PANTHER" id="PTHR38015">
    <property type="entry name" value="BLR6086 PROTEIN"/>
    <property type="match status" value="1"/>
</dbReference>
<dbReference type="PANTHER" id="PTHR38015:SF1">
    <property type="entry name" value="OPINE DEHYDROGENASE DOMAIN-CONTAINING PROTEIN"/>
    <property type="match status" value="1"/>
</dbReference>
<dbReference type="Pfam" id="PF02317">
    <property type="entry name" value="Octopine_DH"/>
    <property type="match status" value="1"/>
</dbReference>
<dbReference type="SUPFAM" id="SSF48179">
    <property type="entry name" value="6-phosphogluconate dehydrogenase C-terminal domain-like"/>
    <property type="match status" value="1"/>
</dbReference>
<dbReference type="SUPFAM" id="SSF51735">
    <property type="entry name" value="NAD(P)-binding Rossmann-fold domains"/>
    <property type="match status" value="1"/>
</dbReference>
<protein>
    <recommendedName>
        <fullName>Protein ocs</fullName>
    </recommendedName>
    <domain>
        <recommendedName>
            <fullName>D-lysopine dehydrogenase</fullName>
            <ecNumber>1.5.1.16</ecNumber>
        </recommendedName>
        <alternativeName>
            <fullName>Lysopine synthase</fullName>
        </alternativeName>
    </domain>
    <domain>
        <recommendedName>
            <fullName>D-octopine dehydrogenase</fullName>
            <ecNumber>1.5.1.11</ecNumber>
        </recommendedName>
        <alternativeName>
            <fullName>Octopine synthase</fullName>
        </alternativeName>
    </domain>
</protein>
<reference key="1">
    <citation type="journal article" date="1982" name="J. Mol. Appl. Genet.">
        <title>Nucleotide sequence and transcript map of the Agrobacterium tumefaciens Ti plasmid-encoded octopine synthase gene.</title>
        <authorList>
            <person name="de Greve H."/>
            <person name="Dhaese P."/>
            <person name="Seurinck J."/>
            <person name="Lemmers M."/>
            <person name="van Montagu M."/>
            <person name="Schell J."/>
        </authorList>
    </citation>
    <scope>NUCLEOTIDE SEQUENCE [GENOMIC DNA]</scope>
</reference>
<evidence type="ECO:0000305" key="1"/>
<geneLocation type="plasmid">
    <name>pTiAch5</name>
</geneLocation>
<sequence>MAKVAILGAGNVALTLAGDLARRLGQVSSIWAPISNRNSFNSVRSLGSLELVGPDYGGDFQPQLEDDLETAISGAAFIFLTVPTMGQQGILCELANFNLSSSVLVALPGSATSLACKQTLTPAFAPIAVIEATTSPYACRRVNAQVLMLSVKRTFEVASTQALSEEVRGGFEILFPNRLQWYQNPASIFFSNTNPVAHPAGILAAKDTIEQGISPIPKFYRKFVPQAITRVTAIDEERLTIVNALGLESETDFAYCKKWYGGHASNAREFYETFEGYADIETPRNMNHRYLSEDVKHILVLWVEIAEVIGVQVPEMKSVVQEASDVLNEDLSHTGRGLSSLNLEGSNANAIVRALNGV</sequence>
<feature type="chain" id="PRO_0000179978" description="Protein ocs">
    <location>
        <begin position="1"/>
        <end position="358"/>
    </location>
</feature>
<name>DHLO_AGRT4</name>
<accession>P0A394</accession>
<accession>P00385</accession>
<gene>
    <name type="primary">ocs</name>
</gene>
<comment type="function">
    <text>Reductive condensation of pyruvate and arginine, lysine, histidine, or octopine to form octopine, lysopine, histopine, or octopinic acid, respectively. NADPH is the preferred cofactor, but NADH can also be used.</text>
</comment>
<comment type="catalytic activity">
    <reaction>
        <text>D-octopine + NAD(+) + H2O = L-arginine + pyruvate + NADH + H(+)</text>
        <dbReference type="Rhea" id="RHEA:16285"/>
        <dbReference type="ChEBI" id="CHEBI:15361"/>
        <dbReference type="ChEBI" id="CHEBI:15377"/>
        <dbReference type="ChEBI" id="CHEBI:15378"/>
        <dbReference type="ChEBI" id="CHEBI:32682"/>
        <dbReference type="ChEBI" id="CHEBI:57520"/>
        <dbReference type="ChEBI" id="CHEBI:57540"/>
        <dbReference type="ChEBI" id="CHEBI:57945"/>
        <dbReference type="EC" id="1.5.1.11"/>
    </reaction>
</comment>
<comment type="catalytic activity">
    <reaction>
        <text>D-lysopine + NADP(+) + H2O = L-lysine + pyruvate + NADPH + H(+)</text>
        <dbReference type="Rhea" id="RHEA:17625"/>
        <dbReference type="ChEBI" id="CHEBI:15361"/>
        <dbReference type="ChEBI" id="CHEBI:15377"/>
        <dbReference type="ChEBI" id="CHEBI:15378"/>
        <dbReference type="ChEBI" id="CHEBI:32551"/>
        <dbReference type="ChEBI" id="CHEBI:57783"/>
        <dbReference type="ChEBI" id="CHEBI:58058"/>
        <dbReference type="ChEBI" id="CHEBI:58349"/>
        <dbReference type="EC" id="1.5.1.16"/>
    </reaction>
</comment>
<comment type="subunit">
    <text>Monomer.</text>
</comment>
<comment type="similarity">
    <text evidence="1">Belongs to the lysopine/nopaline/octopine/opine/vitopine dehydrogenases family.</text>
</comment>
<proteinExistence type="inferred from homology"/>
<organism>
    <name type="scientific">Agrobacterium tumefaciens (strain Ach5)</name>
    <dbReference type="NCBI Taxonomy" id="176298"/>
    <lineage>
        <taxon>Bacteria</taxon>
        <taxon>Pseudomonadati</taxon>
        <taxon>Pseudomonadota</taxon>
        <taxon>Alphaproteobacteria</taxon>
        <taxon>Hyphomicrobiales</taxon>
        <taxon>Rhizobiaceae</taxon>
        <taxon>Rhizobium/Agrobacterium group</taxon>
        <taxon>Agrobacterium</taxon>
        <taxon>Agrobacterium tumefaciens complex</taxon>
    </lineage>
</organism>
<keyword id="KW-0192">Crown gall tumor</keyword>
<keyword id="KW-0520">NAD</keyword>
<keyword id="KW-0521">NADP</keyword>
<keyword id="KW-0560">Oxidoreductase</keyword>
<keyword id="KW-0614">Plasmid</keyword>